<keyword id="KW-0238">DNA-binding</keyword>
<keyword id="KW-0804">Transcription</keyword>
<keyword id="KW-0805">Transcription regulation</keyword>
<gene>
    <name evidence="1" type="primary">yidZ</name>
    <name type="ordered locus">ECUMN_4242</name>
</gene>
<reference key="1">
    <citation type="journal article" date="2009" name="PLoS Genet.">
        <title>Organised genome dynamics in the Escherichia coli species results in highly diverse adaptive paths.</title>
        <authorList>
            <person name="Touchon M."/>
            <person name="Hoede C."/>
            <person name="Tenaillon O."/>
            <person name="Barbe V."/>
            <person name="Baeriswyl S."/>
            <person name="Bidet P."/>
            <person name="Bingen E."/>
            <person name="Bonacorsi S."/>
            <person name="Bouchier C."/>
            <person name="Bouvet O."/>
            <person name="Calteau A."/>
            <person name="Chiapello H."/>
            <person name="Clermont O."/>
            <person name="Cruveiller S."/>
            <person name="Danchin A."/>
            <person name="Diard M."/>
            <person name="Dossat C."/>
            <person name="Karoui M.E."/>
            <person name="Frapy E."/>
            <person name="Garry L."/>
            <person name="Ghigo J.M."/>
            <person name="Gilles A.M."/>
            <person name="Johnson J."/>
            <person name="Le Bouguenec C."/>
            <person name="Lescat M."/>
            <person name="Mangenot S."/>
            <person name="Martinez-Jehanne V."/>
            <person name="Matic I."/>
            <person name="Nassif X."/>
            <person name="Oztas S."/>
            <person name="Petit M.A."/>
            <person name="Pichon C."/>
            <person name="Rouy Z."/>
            <person name="Ruf C.S."/>
            <person name="Schneider D."/>
            <person name="Tourret J."/>
            <person name="Vacherie B."/>
            <person name="Vallenet D."/>
            <person name="Medigue C."/>
            <person name="Rocha E.P.C."/>
            <person name="Denamur E."/>
        </authorList>
    </citation>
    <scope>NUCLEOTIDE SEQUENCE [LARGE SCALE GENOMIC DNA]</scope>
    <source>
        <strain>UMN026 / ExPEC</strain>
    </source>
</reference>
<sequence length="319" mass="36952">MKKSITTLDLNLLLCLQLLMQERSVTKAAKRMNVTPSAVSKSLAKLRAWFDDPLFVNSPLGLSPTPLMVSMEQNLAEWMQMSNLLLDKPHHQTPRGLKFELAAESPLMMIMLNALSKRIYQRYPQATIKLRNWDYDSLDAITRGEVDIGFSGRESHPRSRELLSSLPLAIDYEVLFSDVPCVWLRKDHPALHETWNLDTFLRYPHISICWEQSDTWALDNVLQELGRERTIAMSLPEFEQSLFMAAQPDNLLLATAPRYCQYYNQLHQLPLVALPLPFDESQQKKLEVPFTLLWHKRNSHNPKIVWLRETIKHLYASMA</sequence>
<protein>
    <recommendedName>
        <fullName evidence="1">HTH-type transcriptional regulator YidZ</fullName>
    </recommendedName>
</protein>
<evidence type="ECO:0000255" key="1">
    <source>
        <dbReference type="HAMAP-Rule" id="MF_01607"/>
    </source>
</evidence>
<evidence type="ECO:0000305" key="2"/>
<feature type="chain" id="PRO_1000148196" description="HTH-type transcriptional regulator YidZ">
    <location>
        <begin position="1"/>
        <end position="319"/>
    </location>
</feature>
<feature type="domain" description="HTH lysR-type" evidence="1">
    <location>
        <begin position="8"/>
        <end position="65"/>
    </location>
</feature>
<feature type="DNA-binding region" description="H-T-H motif" evidence="1">
    <location>
        <begin position="25"/>
        <end position="44"/>
    </location>
</feature>
<proteinExistence type="inferred from homology"/>
<name>YIDZ_ECOLU</name>
<comment type="function">
    <text evidence="1">Involved in anaerobic NO protection.</text>
</comment>
<comment type="similarity">
    <text evidence="2">Belongs to the LysR transcriptional regulatory family.</text>
</comment>
<organism>
    <name type="scientific">Escherichia coli O17:K52:H18 (strain UMN026 / ExPEC)</name>
    <dbReference type="NCBI Taxonomy" id="585056"/>
    <lineage>
        <taxon>Bacteria</taxon>
        <taxon>Pseudomonadati</taxon>
        <taxon>Pseudomonadota</taxon>
        <taxon>Gammaproteobacteria</taxon>
        <taxon>Enterobacterales</taxon>
        <taxon>Enterobacteriaceae</taxon>
        <taxon>Escherichia</taxon>
    </lineage>
</organism>
<accession>B7NF28</accession>
<dbReference type="EMBL" id="CU928163">
    <property type="protein sequence ID" value="CAR15382.1"/>
    <property type="molecule type" value="Genomic_DNA"/>
</dbReference>
<dbReference type="RefSeq" id="WP_001309861.1">
    <property type="nucleotide sequence ID" value="NC_011751.1"/>
</dbReference>
<dbReference type="RefSeq" id="YP_002414877.1">
    <property type="nucleotide sequence ID" value="NC_011751.1"/>
</dbReference>
<dbReference type="SMR" id="B7NF28"/>
<dbReference type="STRING" id="585056.ECUMN_4242"/>
<dbReference type="KEGG" id="eum:ECUMN_4242"/>
<dbReference type="PATRIC" id="fig|585056.7.peg.4413"/>
<dbReference type="HOGENOM" id="CLU_039613_39_2_6"/>
<dbReference type="Proteomes" id="UP000007097">
    <property type="component" value="Chromosome"/>
</dbReference>
<dbReference type="GO" id="GO:0003677">
    <property type="term" value="F:DNA binding"/>
    <property type="evidence" value="ECO:0007669"/>
    <property type="project" value="UniProtKB-KW"/>
</dbReference>
<dbReference type="GO" id="GO:0003700">
    <property type="term" value="F:DNA-binding transcription factor activity"/>
    <property type="evidence" value="ECO:0007669"/>
    <property type="project" value="UniProtKB-UniRule"/>
</dbReference>
<dbReference type="CDD" id="cd08417">
    <property type="entry name" value="PBP2_Nitroaromatics_like"/>
    <property type="match status" value="1"/>
</dbReference>
<dbReference type="FunFam" id="3.40.190.10:FF:000092">
    <property type="entry name" value="HTH-type transcriptional regulator YidZ"/>
    <property type="match status" value="1"/>
</dbReference>
<dbReference type="Gene3D" id="3.40.190.10">
    <property type="entry name" value="Periplasmic binding protein-like II"/>
    <property type="match status" value="2"/>
</dbReference>
<dbReference type="Gene3D" id="1.10.10.10">
    <property type="entry name" value="Winged helix-like DNA-binding domain superfamily/Winged helix DNA-binding domain"/>
    <property type="match status" value="1"/>
</dbReference>
<dbReference type="HAMAP" id="MF_01607">
    <property type="entry name" value="HTH_type_YidZ"/>
    <property type="match status" value="1"/>
</dbReference>
<dbReference type="InterPro" id="IPR050389">
    <property type="entry name" value="LysR-type_TF"/>
</dbReference>
<dbReference type="InterPro" id="IPR005119">
    <property type="entry name" value="LysR_subst-bd"/>
</dbReference>
<dbReference type="InterPro" id="IPR000847">
    <property type="entry name" value="Tscrpt_reg_HTH_LysR"/>
</dbReference>
<dbReference type="InterPro" id="IPR023746">
    <property type="entry name" value="Tscrpt_reg_YidZ"/>
</dbReference>
<dbReference type="InterPro" id="IPR036388">
    <property type="entry name" value="WH-like_DNA-bd_sf"/>
</dbReference>
<dbReference type="InterPro" id="IPR036390">
    <property type="entry name" value="WH_DNA-bd_sf"/>
</dbReference>
<dbReference type="InterPro" id="IPR037402">
    <property type="entry name" value="YidZ_PBP2"/>
</dbReference>
<dbReference type="NCBIfam" id="NF007581">
    <property type="entry name" value="PRK10216.1"/>
    <property type="match status" value="1"/>
</dbReference>
<dbReference type="PANTHER" id="PTHR30118">
    <property type="entry name" value="HTH-TYPE TRANSCRIPTIONAL REGULATOR LEUO-RELATED"/>
    <property type="match status" value="1"/>
</dbReference>
<dbReference type="PANTHER" id="PTHR30118:SF11">
    <property type="entry name" value="HTH-TYPE TRANSCRIPTIONAL REGULATOR YIDZ"/>
    <property type="match status" value="1"/>
</dbReference>
<dbReference type="Pfam" id="PF00126">
    <property type="entry name" value="HTH_1"/>
    <property type="match status" value="1"/>
</dbReference>
<dbReference type="Pfam" id="PF03466">
    <property type="entry name" value="LysR_substrate"/>
    <property type="match status" value="1"/>
</dbReference>
<dbReference type="SUPFAM" id="SSF53850">
    <property type="entry name" value="Periplasmic binding protein-like II"/>
    <property type="match status" value="1"/>
</dbReference>
<dbReference type="SUPFAM" id="SSF46785">
    <property type="entry name" value="Winged helix' DNA-binding domain"/>
    <property type="match status" value="1"/>
</dbReference>
<dbReference type="PROSITE" id="PS50931">
    <property type="entry name" value="HTH_LYSR"/>
    <property type="match status" value="1"/>
</dbReference>